<evidence type="ECO:0000255" key="1">
    <source>
        <dbReference type="HAMAP-Rule" id="MF_00366"/>
    </source>
</evidence>
<name>RPOZ_FINM2</name>
<proteinExistence type="inferred from homology"/>
<sequence length="65" mass="7486">MINPSFKKLSEINNSRYALCVMVSKRARMLIDGKETKLKKAKAQPVTTALEEVMEKKVWEDKSNE</sequence>
<keyword id="KW-0240">DNA-directed RNA polymerase</keyword>
<keyword id="KW-0548">Nucleotidyltransferase</keyword>
<keyword id="KW-1185">Reference proteome</keyword>
<keyword id="KW-0804">Transcription</keyword>
<keyword id="KW-0808">Transferase</keyword>
<accession>B0S136</accession>
<feature type="chain" id="PRO_1000121226" description="DNA-directed RNA polymerase subunit omega">
    <location>
        <begin position="1"/>
        <end position="65"/>
    </location>
</feature>
<organism>
    <name type="scientific">Finegoldia magna (strain ATCC 29328 / DSM 20472 / WAL 2508)</name>
    <name type="common">Peptostreptococcus magnus</name>
    <dbReference type="NCBI Taxonomy" id="334413"/>
    <lineage>
        <taxon>Bacteria</taxon>
        <taxon>Bacillati</taxon>
        <taxon>Bacillota</taxon>
        <taxon>Tissierellia</taxon>
        <taxon>Tissierellales</taxon>
        <taxon>Peptoniphilaceae</taxon>
        <taxon>Finegoldia</taxon>
    </lineage>
</organism>
<reference key="1">
    <citation type="journal article" date="2008" name="DNA Res.">
        <title>Complete genome sequence of Finegoldia magna, an anaerobic opportunistic pathogen.</title>
        <authorList>
            <person name="Goto T."/>
            <person name="Yamashita A."/>
            <person name="Hirakawa H."/>
            <person name="Matsutani M."/>
            <person name="Todo K."/>
            <person name="Ohshima K."/>
            <person name="Toh H."/>
            <person name="Miyamoto K."/>
            <person name="Kuhara S."/>
            <person name="Hattori M."/>
            <person name="Shimizu T."/>
            <person name="Akimoto S."/>
        </authorList>
    </citation>
    <scope>NUCLEOTIDE SEQUENCE [LARGE SCALE GENOMIC DNA]</scope>
    <source>
        <strain>ATCC 29328 / DSM 20472 / WAL 2508</strain>
    </source>
</reference>
<protein>
    <recommendedName>
        <fullName evidence="1">DNA-directed RNA polymerase subunit omega</fullName>
        <shortName evidence="1">RNAP omega subunit</shortName>
        <ecNumber evidence="1">2.7.7.6</ecNumber>
    </recommendedName>
    <alternativeName>
        <fullName evidence="1">RNA polymerase omega subunit</fullName>
    </alternativeName>
    <alternativeName>
        <fullName evidence="1">Transcriptase subunit omega</fullName>
    </alternativeName>
</protein>
<comment type="function">
    <text evidence="1">Promotes RNA polymerase assembly. Latches the N- and C-terminal regions of the beta' subunit thereby facilitating its interaction with the beta and alpha subunits.</text>
</comment>
<comment type="catalytic activity">
    <reaction evidence="1">
        <text>RNA(n) + a ribonucleoside 5'-triphosphate = RNA(n+1) + diphosphate</text>
        <dbReference type="Rhea" id="RHEA:21248"/>
        <dbReference type="Rhea" id="RHEA-COMP:14527"/>
        <dbReference type="Rhea" id="RHEA-COMP:17342"/>
        <dbReference type="ChEBI" id="CHEBI:33019"/>
        <dbReference type="ChEBI" id="CHEBI:61557"/>
        <dbReference type="ChEBI" id="CHEBI:140395"/>
        <dbReference type="EC" id="2.7.7.6"/>
    </reaction>
</comment>
<comment type="subunit">
    <text evidence="1">The RNAP catalytic core consists of 2 alpha, 1 beta, 1 beta' and 1 omega subunit. When a sigma factor is associated with the core the holoenzyme is formed, which can initiate transcription.</text>
</comment>
<comment type="similarity">
    <text evidence="1">Belongs to the RNA polymerase subunit omega family.</text>
</comment>
<dbReference type="EC" id="2.7.7.6" evidence="1"/>
<dbReference type="EMBL" id="AP008971">
    <property type="protein sequence ID" value="BAG08076.1"/>
    <property type="molecule type" value="Genomic_DNA"/>
</dbReference>
<dbReference type="RefSeq" id="WP_002838258.1">
    <property type="nucleotide sequence ID" value="NC_010376.1"/>
</dbReference>
<dbReference type="SMR" id="B0S136"/>
<dbReference type="STRING" id="334413.FMG_0658"/>
<dbReference type="KEGG" id="fma:FMG_0658"/>
<dbReference type="eggNOG" id="COG1758">
    <property type="taxonomic scope" value="Bacteria"/>
</dbReference>
<dbReference type="HOGENOM" id="CLU_125406_6_1_9"/>
<dbReference type="Proteomes" id="UP000001319">
    <property type="component" value="Chromosome"/>
</dbReference>
<dbReference type="GO" id="GO:0000428">
    <property type="term" value="C:DNA-directed RNA polymerase complex"/>
    <property type="evidence" value="ECO:0007669"/>
    <property type="project" value="UniProtKB-KW"/>
</dbReference>
<dbReference type="GO" id="GO:0003677">
    <property type="term" value="F:DNA binding"/>
    <property type="evidence" value="ECO:0007669"/>
    <property type="project" value="UniProtKB-UniRule"/>
</dbReference>
<dbReference type="GO" id="GO:0003899">
    <property type="term" value="F:DNA-directed RNA polymerase activity"/>
    <property type="evidence" value="ECO:0007669"/>
    <property type="project" value="UniProtKB-UniRule"/>
</dbReference>
<dbReference type="GO" id="GO:0006351">
    <property type="term" value="P:DNA-templated transcription"/>
    <property type="evidence" value="ECO:0007669"/>
    <property type="project" value="UniProtKB-UniRule"/>
</dbReference>
<dbReference type="Gene3D" id="3.90.940.10">
    <property type="match status" value="1"/>
</dbReference>
<dbReference type="HAMAP" id="MF_00366">
    <property type="entry name" value="RNApol_bact_RpoZ"/>
    <property type="match status" value="1"/>
</dbReference>
<dbReference type="InterPro" id="IPR003716">
    <property type="entry name" value="DNA-dir_RNA_pol_omega"/>
</dbReference>
<dbReference type="InterPro" id="IPR006110">
    <property type="entry name" value="Pol_omega/Rpo6/RPB6"/>
</dbReference>
<dbReference type="InterPro" id="IPR036161">
    <property type="entry name" value="RPB6/omega-like_sf"/>
</dbReference>
<dbReference type="Pfam" id="PF01192">
    <property type="entry name" value="RNA_pol_Rpb6"/>
    <property type="match status" value="1"/>
</dbReference>
<dbReference type="SMART" id="SM01409">
    <property type="entry name" value="RNA_pol_Rpb6"/>
    <property type="match status" value="1"/>
</dbReference>
<dbReference type="SUPFAM" id="SSF63562">
    <property type="entry name" value="RPB6/omega subunit-like"/>
    <property type="match status" value="1"/>
</dbReference>
<gene>
    <name evidence="1" type="primary">rpoZ</name>
    <name type="ordered locus">FMG_0658</name>
</gene>